<proteinExistence type="evidence at transcript level"/>
<comment type="function">
    <text evidence="1">Releases the supercoiling and torsional tension of DNA introduced during the DNA replication and transcription by transiently cleaving and rejoining one strand of the DNA duplex. Introduces a single-strand break via transesterification at a target site in duplex DNA. The scissile phosphodiester is attacked by the catalytic tyrosine of the enzyme, resulting in the formation of a DNA-(5'-phosphotyrosyl)-enzyme intermediate and the expulsion of a 3'-OH DNA strand. The free DNA strand then undergoes passage around the unbroken strand thus removing DNA supercoils. Finally, in the religation step, the DNA 3'-OH attacks the covalent intermediate to expel the active-site tyrosine and restore the DNA phosphodiester backbone. As an essential component of the RMI complex it is involved in chromosome separation and the processing of homologous recombination intermediates to limit DNA crossover formation in cells. Has DNA decatenation activity. It is required for mtDNA decatenation and segregation after completion of replication, in a process that does not require BLM, RMI1 and RMI2.</text>
</comment>
<comment type="catalytic activity">
    <reaction evidence="6">
        <text>ATP-independent breakage of single-stranded DNA, followed by passage and rejoining.</text>
        <dbReference type="EC" id="5.6.2.1"/>
    </reaction>
</comment>
<comment type="cofactor">
    <cofactor>
        <name>Mg(2+)</name>
        <dbReference type="ChEBI" id="CHEBI:18420"/>
    </cofactor>
</comment>
<comment type="subunit">
    <text evidence="1">Binds ssDNA. Interacts (via N-terminal region) with BLM; the interaction is direct. Directly interacts with RMI1. Component of the RMI complex, containing at least TOP3A, RMI1 and RMI2. The RMI complex interacts with BLM.</text>
</comment>
<comment type="subcellular location">
    <subcellularLocation>
        <location evidence="1">Mitochondrion matrix</location>
    </subcellularLocation>
</comment>
<comment type="tissue specificity">
    <text>Highly expressed in testis.</text>
</comment>
<comment type="similarity">
    <text evidence="5 8">Belongs to the type IA topoisomerase family.</text>
</comment>
<name>TOP3A_MOUSE</name>
<keyword id="KW-0238">DNA-binding</keyword>
<keyword id="KW-0413">Isomerase</keyword>
<keyword id="KW-0460">Magnesium</keyword>
<keyword id="KW-0479">Metal-binding</keyword>
<keyword id="KW-0496">Mitochondrion</keyword>
<keyword id="KW-1185">Reference proteome</keyword>
<keyword id="KW-0677">Repeat</keyword>
<keyword id="KW-0799">Topoisomerase</keyword>
<keyword id="KW-0862">Zinc</keyword>
<keyword id="KW-0863">Zinc-finger</keyword>
<evidence type="ECO:0000250" key="1">
    <source>
        <dbReference type="UniProtKB" id="Q13472"/>
    </source>
</evidence>
<evidence type="ECO:0000255" key="2"/>
<evidence type="ECO:0000255" key="3">
    <source>
        <dbReference type="PROSITE-ProRule" id="PRU00995"/>
    </source>
</evidence>
<evidence type="ECO:0000255" key="4">
    <source>
        <dbReference type="PROSITE-ProRule" id="PRU01343"/>
    </source>
</evidence>
<evidence type="ECO:0000255" key="5">
    <source>
        <dbReference type="PROSITE-ProRule" id="PRU01383"/>
    </source>
</evidence>
<evidence type="ECO:0000255" key="6">
    <source>
        <dbReference type="PROSITE-ProRule" id="PRU10131"/>
    </source>
</evidence>
<evidence type="ECO:0000256" key="7">
    <source>
        <dbReference type="SAM" id="MobiDB-lite"/>
    </source>
</evidence>
<evidence type="ECO:0000305" key="8"/>
<dbReference type="EC" id="5.6.2.1" evidence="6"/>
<dbReference type="EMBL" id="AB006074">
    <property type="protein sequence ID" value="BAA25662.1"/>
    <property type="molecule type" value="mRNA"/>
</dbReference>
<dbReference type="CCDS" id="CCDS24797.1"/>
<dbReference type="PIR" id="T13951">
    <property type="entry name" value="T13951"/>
</dbReference>
<dbReference type="RefSeq" id="NP_033436.1">
    <property type="nucleotide sequence ID" value="NM_009410.4"/>
</dbReference>
<dbReference type="SMR" id="O70157"/>
<dbReference type="BioGRID" id="204278">
    <property type="interactions" value="14"/>
</dbReference>
<dbReference type="ComplexPortal" id="CPX-3303">
    <property type="entry name" value="BTR double Holliday Junction dissolution complex"/>
</dbReference>
<dbReference type="FunCoup" id="O70157">
    <property type="interactions" value="3396"/>
</dbReference>
<dbReference type="IntAct" id="O70157">
    <property type="interactions" value="9"/>
</dbReference>
<dbReference type="STRING" id="10090.ENSMUSP00000002891"/>
<dbReference type="GlyGen" id="O70157">
    <property type="glycosylation" value="1 site"/>
</dbReference>
<dbReference type="iPTMnet" id="O70157"/>
<dbReference type="PhosphoSitePlus" id="O70157"/>
<dbReference type="PaxDb" id="10090-ENSMUSP00000002891"/>
<dbReference type="PeptideAtlas" id="O70157"/>
<dbReference type="ProteomicsDB" id="259156"/>
<dbReference type="Pumba" id="O70157"/>
<dbReference type="Antibodypedia" id="43348">
    <property type="antibodies" value="80 antibodies from 20 providers"/>
</dbReference>
<dbReference type="DNASU" id="21975"/>
<dbReference type="Ensembl" id="ENSMUST00000002891.11">
    <property type="protein sequence ID" value="ENSMUSP00000002891.5"/>
    <property type="gene ID" value="ENSMUSG00000002814.16"/>
</dbReference>
<dbReference type="GeneID" id="21975"/>
<dbReference type="KEGG" id="mmu:21975"/>
<dbReference type="UCSC" id="uc007jgl.1">
    <property type="organism name" value="mouse"/>
</dbReference>
<dbReference type="AGR" id="MGI:1197527"/>
<dbReference type="CTD" id="7156"/>
<dbReference type="MGI" id="MGI:1197527">
    <property type="gene designation" value="Top3a"/>
</dbReference>
<dbReference type="VEuPathDB" id="HostDB:ENSMUSG00000002814"/>
<dbReference type="eggNOG" id="KOG1956">
    <property type="taxonomic scope" value="Eukaryota"/>
</dbReference>
<dbReference type="GeneTree" id="ENSGT00940000156701"/>
<dbReference type="InParanoid" id="O70157"/>
<dbReference type="OMA" id="MELAMGD"/>
<dbReference type="OrthoDB" id="430051at2759"/>
<dbReference type="PhylomeDB" id="O70157"/>
<dbReference type="TreeFam" id="TF105287"/>
<dbReference type="Reactome" id="R-MMU-5685938">
    <property type="pathway name" value="HDR through Single Strand Annealing (SSA)"/>
</dbReference>
<dbReference type="Reactome" id="R-MMU-5685942">
    <property type="pathway name" value="HDR through Homologous Recombination (HRR)"/>
</dbReference>
<dbReference type="Reactome" id="R-MMU-5693568">
    <property type="pathway name" value="Resolution of D-loop Structures through Holliday Junction Intermediates"/>
</dbReference>
<dbReference type="Reactome" id="R-MMU-5693579">
    <property type="pathway name" value="Homologous DNA Pairing and Strand Exchange"/>
</dbReference>
<dbReference type="Reactome" id="R-MMU-5693607">
    <property type="pathway name" value="Processing of DNA double-strand break ends"/>
</dbReference>
<dbReference type="Reactome" id="R-MMU-5693616">
    <property type="pathway name" value="Presynaptic phase of homologous DNA pairing and strand exchange"/>
</dbReference>
<dbReference type="Reactome" id="R-MMU-6804756">
    <property type="pathway name" value="Regulation of TP53 Activity through Phosphorylation"/>
</dbReference>
<dbReference type="Reactome" id="R-MMU-69473">
    <property type="pathway name" value="G2/M DNA damage checkpoint"/>
</dbReference>
<dbReference type="BioGRID-ORCS" id="21975">
    <property type="hits" value="27 hits in 76 CRISPR screens"/>
</dbReference>
<dbReference type="ChiTaRS" id="Top3a">
    <property type="organism name" value="mouse"/>
</dbReference>
<dbReference type="PRO" id="PR:O70157"/>
<dbReference type="Proteomes" id="UP000000589">
    <property type="component" value="Chromosome 11"/>
</dbReference>
<dbReference type="RNAct" id="O70157">
    <property type="molecule type" value="protein"/>
</dbReference>
<dbReference type="Bgee" id="ENSMUSG00000002814">
    <property type="expression patterns" value="Expressed in spermatocyte and 188 other cell types or tissues"/>
</dbReference>
<dbReference type="ExpressionAtlas" id="O70157">
    <property type="expression patterns" value="baseline and differential"/>
</dbReference>
<dbReference type="GO" id="GO:0005759">
    <property type="term" value="C:mitochondrial matrix"/>
    <property type="evidence" value="ECO:0007669"/>
    <property type="project" value="UniProtKB-SubCell"/>
</dbReference>
<dbReference type="GO" id="GO:0005654">
    <property type="term" value="C:nucleoplasm"/>
    <property type="evidence" value="ECO:0000304"/>
    <property type="project" value="Reactome"/>
</dbReference>
<dbReference type="GO" id="GO:0005634">
    <property type="term" value="C:nucleus"/>
    <property type="evidence" value="ECO:0000303"/>
    <property type="project" value="ComplexPortal"/>
</dbReference>
<dbReference type="GO" id="GO:0016605">
    <property type="term" value="C:PML body"/>
    <property type="evidence" value="ECO:0007669"/>
    <property type="project" value="Ensembl"/>
</dbReference>
<dbReference type="GO" id="GO:0031422">
    <property type="term" value="C:RecQ family helicase-topoisomerase III complex"/>
    <property type="evidence" value="ECO:0000266"/>
    <property type="project" value="ComplexPortal"/>
</dbReference>
<dbReference type="GO" id="GO:0003917">
    <property type="term" value="F:DNA topoisomerase type I (single strand cut, ATP-independent) activity"/>
    <property type="evidence" value="ECO:0000250"/>
    <property type="project" value="UniProtKB"/>
</dbReference>
<dbReference type="GO" id="GO:0003697">
    <property type="term" value="F:single-stranded DNA binding"/>
    <property type="evidence" value="ECO:0007669"/>
    <property type="project" value="Ensembl"/>
</dbReference>
<dbReference type="GO" id="GO:0008270">
    <property type="term" value="F:zinc ion binding"/>
    <property type="evidence" value="ECO:0007669"/>
    <property type="project" value="UniProtKB-KW"/>
</dbReference>
<dbReference type="GO" id="GO:0051304">
    <property type="term" value="P:chromosome separation"/>
    <property type="evidence" value="ECO:0000250"/>
    <property type="project" value="UniProtKB"/>
</dbReference>
<dbReference type="GO" id="GO:0006265">
    <property type="term" value="P:DNA topological change"/>
    <property type="evidence" value="ECO:0000250"/>
    <property type="project" value="UniProtKB"/>
</dbReference>
<dbReference type="GO" id="GO:0000724">
    <property type="term" value="P:double-strand break repair via homologous recombination"/>
    <property type="evidence" value="ECO:0000266"/>
    <property type="project" value="ComplexPortal"/>
</dbReference>
<dbReference type="GO" id="GO:0032042">
    <property type="term" value="P:mitochondrial DNA metabolic process"/>
    <property type="evidence" value="ECO:0007669"/>
    <property type="project" value="Ensembl"/>
</dbReference>
<dbReference type="GO" id="GO:0071139">
    <property type="term" value="P:resolution of DNA recombination intermediates"/>
    <property type="evidence" value="ECO:0000266"/>
    <property type="project" value="ComplexPortal"/>
</dbReference>
<dbReference type="CDD" id="cd00186">
    <property type="entry name" value="TOP1Ac"/>
    <property type="match status" value="1"/>
</dbReference>
<dbReference type="CDD" id="cd03362">
    <property type="entry name" value="TOPRIM_TopoIA_TopoIII"/>
    <property type="match status" value="1"/>
</dbReference>
<dbReference type="FunFam" id="1.10.290.10:FF:000001">
    <property type="entry name" value="DNA topoisomerase"/>
    <property type="match status" value="1"/>
</dbReference>
<dbReference type="FunFam" id="2.70.20.10:FF:000004">
    <property type="entry name" value="DNA topoisomerase"/>
    <property type="match status" value="1"/>
</dbReference>
<dbReference type="FunFam" id="3.30.65.10:FF:000007">
    <property type="entry name" value="DNA topoisomerase"/>
    <property type="match status" value="1"/>
</dbReference>
<dbReference type="FunFam" id="3.40.50.140:FF:000003">
    <property type="entry name" value="DNA topoisomerase"/>
    <property type="match status" value="1"/>
</dbReference>
<dbReference type="FunFam" id="1.10.460.10:FF:000020">
    <property type="entry name" value="DNA topoisomerase 3-alpha"/>
    <property type="match status" value="1"/>
</dbReference>
<dbReference type="Gene3D" id="3.40.50.140">
    <property type="match status" value="1"/>
</dbReference>
<dbReference type="Gene3D" id="3.30.65.10">
    <property type="entry name" value="Bacterial Topoisomerase I, domain 1"/>
    <property type="match status" value="1"/>
</dbReference>
<dbReference type="Gene3D" id="1.10.460.10">
    <property type="entry name" value="Topoisomerase I, domain 2"/>
    <property type="match status" value="1"/>
</dbReference>
<dbReference type="Gene3D" id="2.70.20.10">
    <property type="entry name" value="Topoisomerase I, domain 3"/>
    <property type="match status" value="1"/>
</dbReference>
<dbReference type="Gene3D" id="1.10.290.10">
    <property type="entry name" value="Topoisomerase I, domain 4"/>
    <property type="match status" value="1"/>
</dbReference>
<dbReference type="InterPro" id="IPR000380">
    <property type="entry name" value="Topo_IA"/>
</dbReference>
<dbReference type="InterPro" id="IPR003601">
    <property type="entry name" value="Topo_IA_2"/>
</dbReference>
<dbReference type="InterPro" id="IPR023406">
    <property type="entry name" value="Topo_IA_AS"/>
</dbReference>
<dbReference type="InterPro" id="IPR013497">
    <property type="entry name" value="Topo_IA_cen"/>
</dbReference>
<dbReference type="InterPro" id="IPR013824">
    <property type="entry name" value="Topo_IA_cen_sub1"/>
</dbReference>
<dbReference type="InterPro" id="IPR013825">
    <property type="entry name" value="Topo_IA_cen_sub2"/>
</dbReference>
<dbReference type="InterPro" id="IPR013826">
    <property type="entry name" value="Topo_IA_cen_sub3"/>
</dbReference>
<dbReference type="InterPro" id="IPR023405">
    <property type="entry name" value="Topo_IA_core_domain"/>
</dbReference>
<dbReference type="InterPro" id="IPR003602">
    <property type="entry name" value="Topo_IA_DNA-bd_dom"/>
</dbReference>
<dbReference type="InterPro" id="IPR013498">
    <property type="entry name" value="Topo_IA_Znf"/>
</dbReference>
<dbReference type="InterPro" id="IPR006171">
    <property type="entry name" value="TOPRIM_dom"/>
</dbReference>
<dbReference type="InterPro" id="IPR034144">
    <property type="entry name" value="TOPRIM_TopoIII"/>
</dbReference>
<dbReference type="InterPro" id="IPR010666">
    <property type="entry name" value="Znf_GRF"/>
</dbReference>
<dbReference type="PANTHER" id="PTHR11390:SF21">
    <property type="entry name" value="DNA TOPOISOMERASE 3-ALPHA"/>
    <property type="match status" value="1"/>
</dbReference>
<dbReference type="PANTHER" id="PTHR11390">
    <property type="entry name" value="PROKARYOTIC DNA TOPOISOMERASE"/>
    <property type="match status" value="1"/>
</dbReference>
<dbReference type="Pfam" id="PF01131">
    <property type="entry name" value="Topoisom_bac"/>
    <property type="match status" value="1"/>
</dbReference>
<dbReference type="Pfam" id="PF01751">
    <property type="entry name" value="Toprim"/>
    <property type="match status" value="1"/>
</dbReference>
<dbReference type="Pfam" id="PF06839">
    <property type="entry name" value="Zn_ribbon_GRF"/>
    <property type="match status" value="2"/>
</dbReference>
<dbReference type="Pfam" id="PF01396">
    <property type="entry name" value="Zn_ribbon_Top1"/>
    <property type="match status" value="1"/>
</dbReference>
<dbReference type="PRINTS" id="PR00417">
    <property type="entry name" value="PRTPISMRASEI"/>
</dbReference>
<dbReference type="SMART" id="SM00437">
    <property type="entry name" value="TOP1Ac"/>
    <property type="match status" value="1"/>
</dbReference>
<dbReference type="SMART" id="SM00436">
    <property type="entry name" value="TOP1Bc"/>
    <property type="match status" value="1"/>
</dbReference>
<dbReference type="SMART" id="SM00493">
    <property type="entry name" value="TOPRIM"/>
    <property type="match status" value="1"/>
</dbReference>
<dbReference type="SUPFAM" id="SSF56712">
    <property type="entry name" value="Prokaryotic type I DNA topoisomerase"/>
    <property type="match status" value="1"/>
</dbReference>
<dbReference type="SUPFAM" id="SSF57783">
    <property type="entry name" value="Zinc beta-ribbon"/>
    <property type="match status" value="1"/>
</dbReference>
<dbReference type="PROSITE" id="PS00396">
    <property type="entry name" value="TOPO_IA_1"/>
    <property type="match status" value="1"/>
</dbReference>
<dbReference type="PROSITE" id="PS52039">
    <property type="entry name" value="TOPO_IA_2"/>
    <property type="match status" value="1"/>
</dbReference>
<dbReference type="PROSITE" id="PS50880">
    <property type="entry name" value="TOPRIM"/>
    <property type="match status" value="1"/>
</dbReference>
<dbReference type="PROSITE" id="PS51999">
    <property type="entry name" value="ZF_GRF"/>
    <property type="match status" value="2"/>
</dbReference>
<feature type="chain" id="PRO_0000145191" description="DNA topoisomerase 3-alpha">
    <location>
        <begin position="1"/>
        <end position="1003"/>
    </location>
</feature>
<feature type="domain" description="Toprim" evidence="3">
    <location>
        <begin position="35"/>
        <end position="179"/>
    </location>
</feature>
<feature type="domain" description="Topo IA-type catalytic" evidence="5">
    <location>
        <begin position="197"/>
        <end position="617"/>
    </location>
</feature>
<feature type="zinc finger region" description="C4-type" evidence="2">
    <location>
        <begin position="658"/>
        <end position="685"/>
    </location>
</feature>
<feature type="zinc finger region" description="GRF-type 1" evidence="4">
    <location>
        <begin position="815"/>
        <end position="854"/>
    </location>
</feature>
<feature type="zinc finger region" description="GRF-type 2" evidence="4">
    <location>
        <begin position="899"/>
        <end position="941"/>
    </location>
</feature>
<feature type="region of interest" description="Disordered" evidence="7">
    <location>
        <begin position="400"/>
        <end position="426"/>
    </location>
</feature>
<feature type="region of interest" description="Disordered" evidence="7">
    <location>
        <begin position="856"/>
        <end position="888"/>
    </location>
</feature>
<feature type="region of interest" description="Disordered" evidence="7">
    <location>
        <begin position="946"/>
        <end position="991"/>
    </location>
</feature>
<feature type="compositionally biased region" description="Low complexity" evidence="7">
    <location>
        <begin position="862"/>
        <end position="888"/>
    </location>
</feature>
<feature type="active site" description="O-(5'-phospho-DNA)-tyrosine intermediate" evidence="5">
    <location>
        <position position="362"/>
    </location>
</feature>
<feature type="binding site" evidence="4">
    <location>
        <position position="815"/>
    </location>
    <ligand>
        <name>Zn(2+)</name>
        <dbReference type="ChEBI" id="CHEBI:29105"/>
        <label>1</label>
    </ligand>
</feature>
<feature type="binding site" evidence="4">
    <location>
        <position position="817"/>
    </location>
    <ligand>
        <name>Zn(2+)</name>
        <dbReference type="ChEBI" id="CHEBI:29105"/>
        <label>1</label>
    </ligand>
</feature>
<feature type="binding site" evidence="4">
    <location>
        <position position="840"/>
    </location>
    <ligand>
        <name>Zn(2+)</name>
        <dbReference type="ChEBI" id="CHEBI:29105"/>
        <label>1</label>
    </ligand>
</feature>
<feature type="binding site" evidence="4">
    <location>
        <position position="845"/>
    </location>
    <ligand>
        <name>Zn(2+)</name>
        <dbReference type="ChEBI" id="CHEBI:29105"/>
        <label>1</label>
    </ligand>
</feature>
<feature type="binding site" evidence="4">
    <location>
        <position position="899"/>
    </location>
    <ligand>
        <name>Zn(2+)</name>
        <dbReference type="ChEBI" id="CHEBI:29105"/>
        <label>2</label>
    </ligand>
</feature>
<feature type="binding site" evidence="4">
    <location>
        <position position="901"/>
    </location>
    <ligand>
        <name>Zn(2+)</name>
        <dbReference type="ChEBI" id="CHEBI:29105"/>
        <label>2</label>
    </ligand>
</feature>
<feature type="binding site" evidence="4">
    <location>
        <position position="924"/>
    </location>
    <ligand>
        <name>Zn(2+)</name>
        <dbReference type="ChEBI" id="CHEBI:29105"/>
        <label>2</label>
    </ligand>
</feature>
<feature type="binding site" evidence="4">
    <location>
        <position position="932"/>
    </location>
    <ligand>
        <name>Zn(2+)</name>
        <dbReference type="ChEBI" id="CHEBI:29105"/>
        <label>2</label>
    </ligand>
</feature>
<protein>
    <recommendedName>
        <fullName>DNA topoisomerase 3-alpha</fullName>
        <ecNumber evidence="6">5.6.2.1</ecNumber>
    </recommendedName>
    <alternativeName>
        <fullName>DNA topoisomerase III alpha</fullName>
    </alternativeName>
</protein>
<accession>O70157</accession>
<gene>
    <name type="primary">Top3a</name>
    <name type="synonym">Top3</name>
</gene>
<sequence length="1003" mass="112358">MIFPVTLLAFQWHRRPGGRALSRAAMEVAFRGVRKVLCVAEKNDAAKGIADLLSNGRMRRKEGLSKFNKIYEFDYHLYGQNVTMIMTSVSGHLLAHDFQMQFRKWQSCNPLVLFEAEIEKYCPENFIDIKKTLERETHHCQALVIWTDCDREGENIGFEIIHVCKAVKPNLRVLRARFSEITPHAVRTACENLTEPDQRVSDAVDVRQELDLRIGAAFTRFQTLRLQRIFPEVLAEQLISYGSCQFPTLGFVVERFKAIQAFVPEVFHKIKVTHDHKDGTVEFNWKRYRLFNHTACLVLYQLCMEDPMATVVEVRSKPKSKWRPQALDTVELEKLASRKLRINAKETMRIAEKLYTQGYISYPRTETNIFPKDLNLVALVEQQTVDPHWGAFAQTILERGGPTPRNGSKSDQAHPPIHPTKYTSGLQGDDRRLYEFIVRHFLACCSQDAQGQETTVEIDIAQERFVAHGLIILARNYLDVYPYDHWSDKLLPVYEQGSHFQPSTVEMVDGETSPPQLLTEADLIALMEKHGIGTDATHAEHIETIKARMYVGLTSDKRFLPGHLGMGLVEGYDSMGYEMSKPDLRAELEADLKLICEGKKDKFQVLRQQVQKYKQVFIEAVAKAKKLDEALSQYLGERTEMAQQEEIYPAMPEPVRKCPQCNKDMVLKTKKSGGFYLSCMGFPECRSAVWFPDSVLEASRDNSVCSVCQPPPVYRLKLKFKRGSLPPAMPLEFVGCIGGCDETLKEIFGLRFPRALPRASQPSGHLQASQALNRMDSSQHNLSQPLVNRHTRPSKTVAQALLPPTTAGESNSVTCNCGREAVLLTVRKQGPNQGRHFYKCSNGDCNFFLWADSSHSTGGGTPTSASGPPGSSVGCPSSVGSHMDGFGSLGSDSDGGTPCLCGQPAVTRTVQKDGPNKGRQFHTCAKPREQQCGFFQWVDENVAPGSFAAPAWPGGRGKAQRPEAASKRPRAGSSDAGSTVKKPRKCSLCHQPGHTRTFCPQNR</sequence>
<organism>
    <name type="scientific">Mus musculus</name>
    <name type="common">Mouse</name>
    <dbReference type="NCBI Taxonomy" id="10090"/>
    <lineage>
        <taxon>Eukaryota</taxon>
        <taxon>Metazoa</taxon>
        <taxon>Chordata</taxon>
        <taxon>Craniata</taxon>
        <taxon>Vertebrata</taxon>
        <taxon>Euteleostomi</taxon>
        <taxon>Mammalia</taxon>
        <taxon>Eutheria</taxon>
        <taxon>Euarchontoglires</taxon>
        <taxon>Glires</taxon>
        <taxon>Rodentia</taxon>
        <taxon>Myomorpha</taxon>
        <taxon>Muroidea</taxon>
        <taxon>Muridae</taxon>
        <taxon>Murinae</taxon>
        <taxon>Mus</taxon>
        <taxon>Mus</taxon>
    </lineage>
</organism>
<reference key="1">
    <citation type="journal article" date="1998" name="Biochim. Biophys. Acta">
        <title>Isolation of a cDNA encoding mouse DNA topoisomerase III which is highly expressed at the mRNA level in the testis.</title>
        <authorList>
            <person name="Seki T."/>
            <person name="Seki M."/>
            <person name="Katada T."/>
            <person name="Enomoto T."/>
        </authorList>
    </citation>
    <scope>NUCLEOTIDE SEQUENCE [MRNA]</scope>
    <source>
        <strain>BALB/cJ</strain>
        <tissue>Testis</tissue>
    </source>
</reference>